<feature type="signal peptide" evidence="1">
    <location>
        <begin position="1"/>
        <end position="33"/>
    </location>
</feature>
<feature type="chain" id="PRO_5000102440" description="Photosystem II extrinsic protein V">
    <location>
        <begin position="34"/>
        <end position="170"/>
    </location>
</feature>
<feature type="binding site" description="covalent" evidence="1">
    <location>
        <position position="70"/>
    </location>
    <ligand>
        <name>heme c</name>
        <dbReference type="ChEBI" id="CHEBI:61717"/>
    </ligand>
</feature>
<feature type="binding site" description="covalent" evidence="1">
    <location>
        <position position="73"/>
    </location>
    <ligand>
        <name>heme c</name>
        <dbReference type="ChEBI" id="CHEBI:61717"/>
    </ligand>
</feature>
<feature type="binding site" description="axial binding residue" evidence="1">
    <location>
        <position position="74"/>
    </location>
    <ligand>
        <name>heme c</name>
        <dbReference type="ChEBI" id="CHEBI:61717"/>
    </ligand>
    <ligandPart>
        <name>Fe</name>
        <dbReference type="ChEBI" id="CHEBI:18248"/>
    </ligandPart>
</feature>
<feature type="binding site" description="axial binding residue" evidence="1">
    <location>
        <position position="125"/>
    </location>
    <ligand>
        <name>heme c</name>
        <dbReference type="ChEBI" id="CHEBI:61717"/>
    </ligand>
    <ligandPart>
        <name>Fe</name>
        <dbReference type="ChEBI" id="CHEBI:18248"/>
    </ligandPart>
</feature>
<evidence type="ECO:0000255" key="1">
    <source>
        <dbReference type="HAMAP-Rule" id="MF_01378"/>
    </source>
</evidence>
<evidence type="ECO:0000305" key="2"/>
<sequence>MASVFSSLRRSLKGLLVLIPVLIGLAVTSPAQAAQWDAETLTVPADPSGTEVTFSDREIDSGRKVFNTSCGTCHAGGITKTNHNVGLDPETLALATPARDNVEALVDYMKDPTSYDGEYSIADLHPSMRDAELYPAMRDLDDEDLRLMAGYILVSPKVQGSAWGGGKIYF</sequence>
<reference key="1">
    <citation type="submission" date="2005-07" db="EMBL/GenBank/DDBJ databases">
        <title>Complete sequence of Synechococcus sp. CC9605.</title>
        <authorList>
            <consortium name="US DOE Joint Genome Institute"/>
            <person name="Copeland A."/>
            <person name="Lucas S."/>
            <person name="Lapidus A."/>
            <person name="Barry K."/>
            <person name="Detter J.C."/>
            <person name="Glavina T."/>
            <person name="Hammon N."/>
            <person name="Israni S."/>
            <person name="Pitluck S."/>
            <person name="Schmutz J."/>
            <person name="Martinez M."/>
            <person name="Larimer F."/>
            <person name="Land M."/>
            <person name="Kyrpides N."/>
            <person name="Ivanova N."/>
            <person name="Richardson P."/>
        </authorList>
    </citation>
    <scope>NUCLEOTIDE SEQUENCE [LARGE SCALE GENOMIC DNA]</scope>
    <source>
        <strain>CC9605</strain>
    </source>
</reference>
<name>CY550_SYNSC</name>
<gene>
    <name evidence="1" type="primary">psbV</name>
    <name type="ordered locus">Syncc9605_2146</name>
</gene>
<accession>Q3AHP7</accession>
<organism>
    <name type="scientific">Synechococcus sp. (strain CC9605)</name>
    <dbReference type="NCBI Taxonomy" id="110662"/>
    <lineage>
        <taxon>Bacteria</taxon>
        <taxon>Bacillati</taxon>
        <taxon>Cyanobacteriota</taxon>
        <taxon>Cyanophyceae</taxon>
        <taxon>Synechococcales</taxon>
        <taxon>Synechococcaceae</taxon>
        <taxon>Synechococcus</taxon>
    </lineage>
</organism>
<proteinExistence type="inferred from homology"/>
<comment type="function">
    <text evidence="1">One of the extrinsic, lumenal subunits of photosystem II (PSII). PSII is a light-driven water plastoquinone oxidoreductase, using light energy to abstract electrons from H(2)O, generating a proton gradient subsequently used for ATP formation. The extrinsic proteins stabilize the structure of photosystem II oxygen-evolving complex (OEC), the ion environment of oxygen evolution and protect the OEC against heat-induced inactivation. Low-potential cytochrome c that plays a role in the OEC of PSII.</text>
</comment>
<comment type="cofactor">
    <cofactor evidence="1">
        <name>heme c</name>
        <dbReference type="ChEBI" id="CHEBI:61717"/>
    </cofactor>
    <text evidence="1">Binds 1 heme c group covalently per subunit.</text>
</comment>
<comment type="subunit">
    <text evidence="1">PSII is composed of 1 copy each of membrane proteins PsbA, PsbB, PsbC, PsbD, PsbE, PsbF, PsbH, PsbI, PsbJ, PsbK, PsbL, PsbM, PsbT, PsbX, PsbY, PsbZ, Psb30/Ycf12, peripheral proteins PsbO, CyanoQ (PsbQ), PsbU, PsbV and a large number of cofactors. It forms dimeric complexes.</text>
</comment>
<comment type="subcellular location">
    <subcellularLocation>
        <location evidence="1">Cellular thylakoid membrane</location>
        <topology evidence="1">Peripheral membrane protein</topology>
        <orientation evidence="1">Lumenal side</orientation>
    </subcellularLocation>
    <text evidence="1">Associated with photosystem II at the lumenal side of the thylakoid membrane.</text>
</comment>
<comment type="similarity">
    <text evidence="1">Belongs to the cytochrome c family. PsbV subfamily.</text>
</comment>
<comment type="sequence caution" evidence="2">
    <conflict type="erroneous initiation">
        <sequence resource="EMBL-CDS" id="ABB35885"/>
    </conflict>
    <text>Extended N-terminus.</text>
</comment>
<protein>
    <recommendedName>
        <fullName evidence="1">Photosystem II extrinsic protein V</fullName>
        <shortName evidence="1">PsbV</shortName>
    </recommendedName>
    <alternativeName>
        <fullName evidence="1">Cytochrome c-550</fullName>
    </alternativeName>
    <alternativeName>
        <fullName evidence="1">Cytochrome c550</fullName>
    </alternativeName>
    <alternativeName>
        <fullName evidence="1">Low-potential cytochrome c</fullName>
    </alternativeName>
</protein>
<keyword id="KW-0249">Electron transport</keyword>
<keyword id="KW-0349">Heme</keyword>
<keyword id="KW-0408">Iron</keyword>
<keyword id="KW-0472">Membrane</keyword>
<keyword id="KW-0479">Metal-binding</keyword>
<keyword id="KW-0602">Photosynthesis</keyword>
<keyword id="KW-0604">Photosystem II</keyword>
<keyword id="KW-0732">Signal</keyword>
<keyword id="KW-0793">Thylakoid</keyword>
<keyword id="KW-0813">Transport</keyword>
<dbReference type="EMBL" id="CP000110">
    <property type="protein sequence ID" value="ABB35885.1"/>
    <property type="status" value="ALT_INIT"/>
    <property type="molecule type" value="Genomic_DNA"/>
</dbReference>
<dbReference type="RefSeq" id="WP_041435140.1">
    <property type="nucleotide sequence ID" value="NC_007516.1"/>
</dbReference>
<dbReference type="SMR" id="Q3AHP7"/>
<dbReference type="STRING" id="110662.Syncc9605_2146"/>
<dbReference type="KEGG" id="syd:Syncc9605_2146"/>
<dbReference type="eggNOG" id="COG2010">
    <property type="taxonomic scope" value="Bacteria"/>
</dbReference>
<dbReference type="HOGENOM" id="CLU_104149_1_0_3"/>
<dbReference type="OrthoDB" id="486949at2"/>
<dbReference type="GO" id="GO:0009523">
    <property type="term" value="C:photosystem II"/>
    <property type="evidence" value="ECO:0007669"/>
    <property type="project" value="UniProtKB-KW"/>
</dbReference>
<dbReference type="GO" id="GO:0031676">
    <property type="term" value="C:plasma membrane-derived thylakoid membrane"/>
    <property type="evidence" value="ECO:0007669"/>
    <property type="project" value="UniProtKB-SubCell"/>
</dbReference>
<dbReference type="GO" id="GO:0009055">
    <property type="term" value="F:electron transfer activity"/>
    <property type="evidence" value="ECO:0007669"/>
    <property type="project" value="InterPro"/>
</dbReference>
<dbReference type="GO" id="GO:0020037">
    <property type="term" value="F:heme binding"/>
    <property type="evidence" value="ECO:0007669"/>
    <property type="project" value="InterPro"/>
</dbReference>
<dbReference type="GO" id="GO:0005506">
    <property type="term" value="F:iron ion binding"/>
    <property type="evidence" value="ECO:0007669"/>
    <property type="project" value="InterPro"/>
</dbReference>
<dbReference type="GO" id="GO:0019684">
    <property type="term" value="P:photosynthesis, light reaction"/>
    <property type="evidence" value="ECO:0007669"/>
    <property type="project" value="UniProtKB-UniRule"/>
</dbReference>
<dbReference type="GO" id="GO:0022904">
    <property type="term" value="P:respiratory electron transport chain"/>
    <property type="evidence" value="ECO:0007669"/>
    <property type="project" value="InterPro"/>
</dbReference>
<dbReference type="Gene3D" id="1.10.760.10">
    <property type="entry name" value="Cytochrome c-like domain"/>
    <property type="match status" value="1"/>
</dbReference>
<dbReference type="HAMAP" id="MF_01378">
    <property type="entry name" value="PSII_Cyt550"/>
    <property type="match status" value="1"/>
</dbReference>
<dbReference type="InterPro" id="IPR009056">
    <property type="entry name" value="Cyt_c-like_dom"/>
</dbReference>
<dbReference type="InterPro" id="IPR036909">
    <property type="entry name" value="Cyt_c-like_dom_sf"/>
</dbReference>
<dbReference type="InterPro" id="IPR029490">
    <property type="entry name" value="Cytochrom_C550"/>
</dbReference>
<dbReference type="InterPro" id="IPR017851">
    <property type="entry name" value="PsbV_cyt_c550"/>
</dbReference>
<dbReference type="InterPro" id="IPR016003">
    <property type="entry name" value="PsbV_cyt_c550-like"/>
</dbReference>
<dbReference type="NCBIfam" id="TIGR03045">
    <property type="entry name" value="PS_II_C550"/>
    <property type="match status" value="1"/>
</dbReference>
<dbReference type="Pfam" id="PF14495">
    <property type="entry name" value="Cytochrom_C550"/>
    <property type="match status" value="1"/>
</dbReference>
<dbReference type="PIRSF" id="PIRSF005890">
    <property type="entry name" value="Phot_II_cyt_c550"/>
    <property type="match status" value="1"/>
</dbReference>
<dbReference type="SUPFAM" id="SSF46626">
    <property type="entry name" value="Cytochrome c"/>
    <property type="match status" value="1"/>
</dbReference>
<dbReference type="PROSITE" id="PS51007">
    <property type="entry name" value="CYTC"/>
    <property type="match status" value="1"/>
</dbReference>